<evidence type="ECO:0000255" key="1">
    <source>
        <dbReference type="HAMAP-Rule" id="MF_01006"/>
    </source>
</evidence>
<dbReference type="EC" id="3.6.1.27" evidence="1"/>
<dbReference type="EMBL" id="CP000255">
    <property type="protein sequence ID" value="ABD20964.1"/>
    <property type="molecule type" value="Genomic_DNA"/>
</dbReference>
<dbReference type="RefSeq" id="WP_000469890.1">
    <property type="nucleotide sequence ID" value="NZ_CP027476.1"/>
</dbReference>
<dbReference type="SMR" id="Q2FIV6"/>
<dbReference type="KEGG" id="saa:SAUSA300_0669"/>
<dbReference type="HOGENOM" id="CLU_060296_2_0_9"/>
<dbReference type="OMA" id="AWYRIVF"/>
<dbReference type="Proteomes" id="UP000001939">
    <property type="component" value="Chromosome"/>
</dbReference>
<dbReference type="GO" id="GO:0005886">
    <property type="term" value="C:plasma membrane"/>
    <property type="evidence" value="ECO:0007669"/>
    <property type="project" value="UniProtKB-SubCell"/>
</dbReference>
<dbReference type="GO" id="GO:0050380">
    <property type="term" value="F:undecaprenyl-diphosphatase activity"/>
    <property type="evidence" value="ECO:0007669"/>
    <property type="project" value="UniProtKB-UniRule"/>
</dbReference>
<dbReference type="GO" id="GO:0071555">
    <property type="term" value="P:cell wall organization"/>
    <property type="evidence" value="ECO:0007669"/>
    <property type="project" value="UniProtKB-KW"/>
</dbReference>
<dbReference type="GO" id="GO:0009252">
    <property type="term" value="P:peptidoglycan biosynthetic process"/>
    <property type="evidence" value="ECO:0007669"/>
    <property type="project" value="UniProtKB-KW"/>
</dbReference>
<dbReference type="GO" id="GO:0008360">
    <property type="term" value="P:regulation of cell shape"/>
    <property type="evidence" value="ECO:0007669"/>
    <property type="project" value="UniProtKB-KW"/>
</dbReference>
<dbReference type="GO" id="GO:0046677">
    <property type="term" value="P:response to antibiotic"/>
    <property type="evidence" value="ECO:0007669"/>
    <property type="project" value="UniProtKB-UniRule"/>
</dbReference>
<dbReference type="HAMAP" id="MF_01006">
    <property type="entry name" value="Undec_diphosphatase"/>
    <property type="match status" value="1"/>
</dbReference>
<dbReference type="InterPro" id="IPR003824">
    <property type="entry name" value="UppP"/>
</dbReference>
<dbReference type="NCBIfam" id="NF001390">
    <property type="entry name" value="PRK00281.1-4"/>
    <property type="match status" value="1"/>
</dbReference>
<dbReference type="NCBIfam" id="TIGR00753">
    <property type="entry name" value="undec_PP_bacA"/>
    <property type="match status" value="1"/>
</dbReference>
<dbReference type="PANTHER" id="PTHR30622">
    <property type="entry name" value="UNDECAPRENYL-DIPHOSPHATASE"/>
    <property type="match status" value="1"/>
</dbReference>
<dbReference type="PANTHER" id="PTHR30622:SF3">
    <property type="entry name" value="UNDECAPRENYL-DIPHOSPHATASE"/>
    <property type="match status" value="1"/>
</dbReference>
<dbReference type="Pfam" id="PF02673">
    <property type="entry name" value="BacA"/>
    <property type="match status" value="1"/>
</dbReference>
<sequence length="291" mass="32269">MFIIELIKGIILGVVEGLTEFAPVSSTGHMILVDDMWLKSSEFLGSQSAFTFKIVIQLGSVFAAAWVFRERFLEILHIGKHKHVEGDNDQQRRSKPRRLNLLHVLVGMVPAGILGLLFDDFIEEHLFSVPTVMIGLFVGAIYMIIADKYSAKVKNPQTVDQISYFQAFVIGISQAVAMWPGFSRSGSTISTGVLMKLNHKAASDFTFIMAVPIMLAASGLSLLKHYQDIQIADIPFYILGFLAAFTVGLIAIKTFLHLINKIKLIPFAIYRIVLVIFIAILYFGFGIGKGI</sequence>
<name>UPPP_STAA3</name>
<comment type="function">
    <text evidence="1">Catalyzes the dephosphorylation of undecaprenyl diphosphate (UPP). Confers resistance to bacitracin.</text>
</comment>
<comment type="catalytic activity">
    <reaction evidence="1">
        <text>di-trans,octa-cis-undecaprenyl diphosphate + H2O = di-trans,octa-cis-undecaprenyl phosphate + phosphate + H(+)</text>
        <dbReference type="Rhea" id="RHEA:28094"/>
        <dbReference type="ChEBI" id="CHEBI:15377"/>
        <dbReference type="ChEBI" id="CHEBI:15378"/>
        <dbReference type="ChEBI" id="CHEBI:43474"/>
        <dbReference type="ChEBI" id="CHEBI:58405"/>
        <dbReference type="ChEBI" id="CHEBI:60392"/>
        <dbReference type="EC" id="3.6.1.27"/>
    </reaction>
</comment>
<comment type="subcellular location">
    <subcellularLocation>
        <location evidence="1">Cell membrane</location>
        <topology evidence="1">Multi-pass membrane protein</topology>
    </subcellularLocation>
</comment>
<comment type="miscellaneous">
    <text>Bacitracin is thought to be involved in the inhibition of peptidoglycan synthesis by sequestering undecaprenyl diphosphate, thereby reducing the pool of lipid carrier available.</text>
</comment>
<comment type="similarity">
    <text evidence="1">Belongs to the UppP family.</text>
</comment>
<organism>
    <name type="scientific">Staphylococcus aureus (strain USA300)</name>
    <dbReference type="NCBI Taxonomy" id="367830"/>
    <lineage>
        <taxon>Bacteria</taxon>
        <taxon>Bacillati</taxon>
        <taxon>Bacillota</taxon>
        <taxon>Bacilli</taxon>
        <taxon>Bacillales</taxon>
        <taxon>Staphylococcaceae</taxon>
        <taxon>Staphylococcus</taxon>
    </lineage>
</organism>
<accession>Q2FIV6</accession>
<proteinExistence type="inferred from homology"/>
<gene>
    <name evidence="1" type="primary">uppP</name>
    <name type="ordered locus">SAUSA300_0669</name>
</gene>
<reference key="1">
    <citation type="journal article" date="2006" name="Lancet">
        <title>Complete genome sequence of USA300, an epidemic clone of community-acquired meticillin-resistant Staphylococcus aureus.</title>
        <authorList>
            <person name="Diep B.A."/>
            <person name="Gill S.R."/>
            <person name="Chang R.F."/>
            <person name="Phan T.H."/>
            <person name="Chen J.H."/>
            <person name="Davidson M.G."/>
            <person name="Lin F."/>
            <person name="Lin J."/>
            <person name="Carleton H.A."/>
            <person name="Mongodin E.F."/>
            <person name="Sensabaugh G.F."/>
            <person name="Perdreau-Remington F."/>
        </authorList>
    </citation>
    <scope>NUCLEOTIDE SEQUENCE [LARGE SCALE GENOMIC DNA]</scope>
    <source>
        <strain>USA300</strain>
    </source>
</reference>
<keyword id="KW-0046">Antibiotic resistance</keyword>
<keyword id="KW-1003">Cell membrane</keyword>
<keyword id="KW-0133">Cell shape</keyword>
<keyword id="KW-0961">Cell wall biogenesis/degradation</keyword>
<keyword id="KW-0378">Hydrolase</keyword>
<keyword id="KW-0472">Membrane</keyword>
<keyword id="KW-0573">Peptidoglycan synthesis</keyword>
<keyword id="KW-0812">Transmembrane</keyword>
<keyword id="KW-1133">Transmembrane helix</keyword>
<protein>
    <recommendedName>
        <fullName evidence="1">Undecaprenyl-diphosphatase</fullName>
        <ecNumber evidence="1">3.6.1.27</ecNumber>
    </recommendedName>
    <alternativeName>
        <fullName evidence="1">Bacitracin resistance protein</fullName>
    </alternativeName>
    <alternativeName>
        <fullName evidence="1">Undecaprenyl pyrophosphate phosphatase</fullName>
    </alternativeName>
</protein>
<feature type="chain" id="PRO_0000250267" description="Undecaprenyl-diphosphatase">
    <location>
        <begin position="1"/>
        <end position="291"/>
    </location>
</feature>
<feature type="transmembrane region" description="Helical" evidence="1">
    <location>
        <begin position="1"/>
        <end position="21"/>
    </location>
</feature>
<feature type="transmembrane region" description="Helical" evidence="1">
    <location>
        <begin position="48"/>
        <end position="68"/>
    </location>
</feature>
<feature type="transmembrane region" description="Helical" evidence="1">
    <location>
        <begin position="102"/>
        <end position="122"/>
    </location>
</feature>
<feature type="transmembrane region" description="Helical" evidence="1">
    <location>
        <begin position="126"/>
        <end position="146"/>
    </location>
</feature>
<feature type="transmembrane region" description="Helical" evidence="1">
    <location>
        <begin position="162"/>
        <end position="182"/>
    </location>
</feature>
<feature type="transmembrane region" description="Helical" evidence="1">
    <location>
        <begin position="203"/>
        <end position="223"/>
    </location>
</feature>
<feature type="transmembrane region" description="Helical" evidence="1">
    <location>
        <begin position="231"/>
        <end position="251"/>
    </location>
</feature>
<feature type="transmembrane region" description="Helical" evidence="1">
    <location>
        <begin position="267"/>
        <end position="287"/>
    </location>
</feature>